<comment type="function">
    <text evidence="3">Probably not involved in gibberellin metabolism since over-expression of CYP714C2 in a heterologous system does not induce semi-dwarfism.</text>
</comment>
<comment type="cofactor">
    <cofactor evidence="1">
        <name>heme</name>
        <dbReference type="ChEBI" id="CHEBI:30413"/>
    </cofactor>
</comment>
<comment type="subcellular location">
    <subcellularLocation>
        <location evidence="4">Membrane</location>
        <topology evidence="4">Single-pass type III membrane protein</topology>
    </subcellularLocation>
</comment>
<comment type="similarity">
    <text evidence="4">Belongs to the cytochrome P450 family.</text>
</comment>
<name>C14C2_ORYSJ</name>
<evidence type="ECO:0000250" key="1"/>
<evidence type="ECO:0000255" key="2"/>
<evidence type="ECO:0000269" key="3">
    <source>
    </source>
</evidence>
<evidence type="ECO:0000305" key="4"/>
<dbReference type="EC" id="1.14.-.-"/>
<dbReference type="EMBL" id="DP000011">
    <property type="protein sequence ID" value="ABA95660.1"/>
    <property type="molecule type" value="Genomic_DNA"/>
</dbReference>
<dbReference type="EMBL" id="AP008218">
    <property type="protein sequence ID" value="BAF29030.1"/>
    <property type="molecule type" value="Genomic_DNA"/>
</dbReference>
<dbReference type="EMBL" id="AP014968">
    <property type="protein sequence ID" value="BAT15635.1"/>
    <property type="molecule type" value="Genomic_DNA"/>
</dbReference>
<dbReference type="EMBL" id="CM000149">
    <property type="protein sequence ID" value="EEE52657.1"/>
    <property type="molecule type" value="Genomic_DNA"/>
</dbReference>
<dbReference type="EMBL" id="AK066943">
    <property type="status" value="NOT_ANNOTATED_CDS"/>
    <property type="molecule type" value="mRNA"/>
</dbReference>
<dbReference type="RefSeq" id="XP_015619747.1">
    <property type="nucleotide sequence ID" value="XM_015764261.1"/>
</dbReference>
<dbReference type="SMR" id="Q2QYH7"/>
<dbReference type="FunCoup" id="Q2QYH7">
    <property type="interactions" value="796"/>
</dbReference>
<dbReference type="STRING" id="39947.Q2QYH7"/>
<dbReference type="PaxDb" id="39947-Q2QYH7"/>
<dbReference type="EnsemblPlants" id="Os12t0119000-01">
    <property type="protein sequence ID" value="Os12t0119000-01"/>
    <property type="gene ID" value="Os12g0119000"/>
</dbReference>
<dbReference type="Gramene" id="Os12t0119000-01">
    <property type="protein sequence ID" value="Os12t0119000-01"/>
    <property type="gene ID" value="Os12g0119000"/>
</dbReference>
<dbReference type="KEGG" id="dosa:Os12g0119000"/>
<dbReference type="eggNOG" id="KOG0157">
    <property type="taxonomic scope" value="Eukaryota"/>
</dbReference>
<dbReference type="HOGENOM" id="CLU_001570_5_0_1"/>
<dbReference type="InParanoid" id="Q2QYH7"/>
<dbReference type="OMA" id="PFGGFYF"/>
<dbReference type="OrthoDB" id="1470350at2759"/>
<dbReference type="Proteomes" id="UP000000763">
    <property type="component" value="Chromosome 12"/>
</dbReference>
<dbReference type="Proteomes" id="UP000007752">
    <property type="component" value="Chromosome 12"/>
</dbReference>
<dbReference type="Proteomes" id="UP000059680">
    <property type="component" value="Chromosome 12"/>
</dbReference>
<dbReference type="GO" id="GO:0016020">
    <property type="term" value="C:membrane"/>
    <property type="evidence" value="ECO:0007669"/>
    <property type="project" value="UniProtKB-SubCell"/>
</dbReference>
<dbReference type="GO" id="GO:0020037">
    <property type="term" value="F:heme binding"/>
    <property type="evidence" value="ECO:0007669"/>
    <property type="project" value="InterPro"/>
</dbReference>
<dbReference type="GO" id="GO:0005506">
    <property type="term" value="F:iron ion binding"/>
    <property type="evidence" value="ECO:0007669"/>
    <property type="project" value="InterPro"/>
</dbReference>
<dbReference type="GO" id="GO:0004497">
    <property type="term" value="F:monooxygenase activity"/>
    <property type="evidence" value="ECO:0000318"/>
    <property type="project" value="GO_Central"/>
</dbReference>
<dbReference type="GO" id="GO:0016705">
    <property type="term" value="F:oxidoreductase activity, acting on paired donors, with incorporation or reduction of molecular oxygen"/>
    <property type="evidence" value="ECO:0007669"/>
    <property type="project" value="InterPro"/>
</dbReference>
<dbReference type="GO" id="GO:0006629">
    <property type="term" value="P:lipid metabolic process"/>
    <property type="evidence" value="ECO:0007669"/>
    <property type="project" value="UniProtKB-ARBA"/>
</dbReference>
<dbReference type="CDD" id="cd20640">
    <property type="entry name" value="CYP714"/>
    <property type="match status" value="1"/>
</dbReference>
<dbReference type="Gene3D" id="1.10.630.10">
    <property type="entry name" value="Cytochrome P450"/>
    <property type="match status" value="1"/>
</dbReference>
<dbReference type="InterPro" id="IPR001128">
    <property type="entry name" value="Cyt_P450"/>
</dbReference>
<dbReference type="InterPro" id="IPR017972">
    <property type="entry name" value="Cyt_P450_CS"/>
</dbReference>
<dbReference type="InterPro" id="IPR002401">
    <property type="entry name" value="Cyt_P450_E_grp-I"/>
</dbReference>
<dbReference type="InterPro" id="IPR036396">
    <property type="entry name" value="Cyt_P450_sf"/>
</dbReference>
<dbReference type="InterPro" id="IPR050665">
    <property type="entry name" value="Cytochrome_P450_Monooxygen"/>
</dbReference>
<dbReference type="PANTHER" id="PTHR24282:SF196">
    <property type="entry name" value="CYTOCHROME P450 714C2"/>
    <property type="match status" value="1"/>
</dbReference>
<dbReference type="PANTHER" id="PTHR24282">
    <property type="entry name" value="CYTOCHROME P450 FAMILY MEMBER"/>
    <property type="match status" value="1"/>
</dbReference>
<dbReference type="Pfam" id="PF00067">
    <property type="entry name" value="p450"/>
    <property type="match status" value="1"/>
</dbReference>
<dbReference type="PRINTS" id="PR00463">
    <property type="entry name" value="EP450I"/>
</dbReference>
<dbReference type="PRINTS" id="PR00385">
    <property type="entry name" value="P450"/>
</dbReference>
<dbReference type="SUPFAM" id="SSF48264">
    <property type="entry name" value="Cytochrome P450"/>
    <property type="match status" value="1"/>
</dbReference>
<dbReference type="PROSITE" id="PS00086">
    <property type="entry name" value="CYTOCHROME_P450"/>
    <property type="match status" value="1"/>
</dbReference>
<protein>
    <recommendedName>
        <fullName>Cytochrome P450 714C2</fullName>
        <ecNumber>1.14.-.-</ecNumber>
    </recommendedName>
</protein>
<organism>
    <name type="scientific">Oryza sativa subsp. japonica</name>
    <name type="common">Rice</name>
    <dbReference type="NCBI Taxonomy" id="39947"/>
    <lineage>
        <taxon>Eukaryota</taxon>
        <taxon>Viridiplantae</taxon>
        <taxon>Streptophyta</taxon>
        <taxon>Embryophyta</taxon>
        <taxon>Tracheophyta</taxon>
        <taxon>Spermatophyta</taxon>
        <taxon>Magnoliopsida</taxon>
        <taxon>Liliopsida</taxon>
        <taxon>Poales</taxon>
        <taxon>Poaceae</taxon>
        <taxon>BOP clade</taxon>
        <taxon>Oryzoideae</taxon>
        <taxon>Oryzeae</taxon>
        <taxon>Oryzinae</taxon>
        <taxon>Oryza</taxon>
        <taxon>Oryza sativa</taxon>
    </lineage>
</organism>
<proteinExistence type="evidence at transcript level"/>
<accession>Q2QYH7</accession>
<accession>A0A0P0Y6E1</accession>
<keyword id="KW-0349">Heme</keyword>
<keyword id="KW-0408">Iron</keyword>
<keyword id="KW-0472">Membrane</keyword>
<keyword id="KW-0479">Metal-binding</keyword>
<keyword id="KW-0503">Monooxygenase</keyword>
<keyword id="KW-0560">Oxidoreductase</keyword>
<keyword id="KW-1185">Reference proteome</keyword>
<keyword id="KW-0735">Signal-anchor</keyword>
<keyword id="KW-0812">Transmembrane</keyword>
<keyword id="KW-1133">Transmembrane helix</keyword>
<feature type="chain" id="PRO_0000422416" description="Cytochrome P450 714C2">
    <location>
        <begin position="1"/>
        <end position="522"/>
    </location>
</feature>
<feature type="topological domain" description="Lumenal" evidence="2">
    <location>
        <begin position="1"/>
        <end position="11"/>
    </location>
</feature>
<feature type="transmembrane region" description="Helical; Signal-anchor for type III membrane protein" evidence="2">
    <location>
        <begin position="12"/>
        <end position="32"/>
    </location>
</feature>
<feature type="topological domain" description="Cytoplasmic" evidence="2">
    <location>
        <begin position="33"/>
        <end position="522"/>
    </location>
</feature>
<feature type="binding site" description="axial binding residue" evidence="1">
    <location>
        <position position="470"/>
    </location>
    <ligand>
        <name>heme</name>
        <dbReference type="ChEBI" id="CHEBI:30413"/>
    </ligand>
    <ligandPart>
        <name>Fe</name>
        <dbReference type="ChEBI" id="CHEBI:18248"/>
    </ligandPart>
</feature>
<feature type="sequence conflict" description="In Ref. 6; AK066943." evidence="4" ref="6">
    <original>P</original>
    <variation>A</variation>
    <location>
        <position position="59"/>
    </location>
</feature>
<reference key="1">
    <citation type="journal article" date="2005" name="BMC Biol.">
        <title>The sequence of rice chromosomes 11 and 12, rich in disease resistance genes and recent gene duplications.</title>
        <authorList>
            <consortium name="The rice chromosomes 11 and 12 sequencing consortia"/>
        </authorList>
    </citation>
    <scope>NUCLEOTIDE SEQUENCE [LARGE SCALE GENOMIC DNA]</scope>
    <source>
        <strain>cv. Nipponbare</strain>
    </source>
</reference>
<reference key="2">
    <citation type="journal article" date="2005" name="Nature">
        <title>The map-based sequence of the rice genome.</title>
        <authorList>
            <consortium name="International rice genome sequencing project (IRGSP)"/>
        </authorList>
    </citation>
    <scope>NUCLEOTIDE SEQUENCE [LARGE SCALE GENOMIC DNA]</scope>
    <source>
        <strain>cv. Nipponbare</strain>
    </source>
</reference>
<reference key="3">
    <citation type="journal article" date="2008" name="Nucleic Acids Res.">
        <title>The rice annotation project database (RAP-DB): 2008 update.</title>
        <authorList>
            <consortium name="The rice annotation project (RAP)"/>
        </authorList>
    </citation>
    <scope>GENOME REANNOTATION</scope>
    <source>
        <strain>cv. Nipponbare</strain>
    </source>
</reference>
<reference key="4">
    <citation type="journal article" date="2013" name="Rice">
        <title>Improvement of the Oryza sativa Nipponbare reference genome using next generation sequence and optical map data.</title>
        <authorList>
            <person name="Kawahara Y."/>
            <person name="de la Bastide M."/>
            <person name="Hamilton J.P."/>
            <person name="Kanamori H."/>
            <person name="McCombie W.R."/>
            <person name="Ouyang S."/>
            <person name="Schwartz D.C."/>
            <person name="Tanaka T."/>
            <person name="Wu J."/>
            <person name="Zhou S."/>
            <person name="Childs K.L."/>
            <person name="Davidson R.M."/>
            <person name="Lin H."/>
            <person name="Quesada-Ocampo L."/>
            <person name="Vaillancourt B."/>
            <person name="Sakai H."/>
            <person name="Lee S.S."/>
            <person name="Kim J."/>
            <person name="Numa H."/>
            <person name="Itoh T."/>
            <person name="Buell C.R."/>
            <person name="Matsumoto T."/>
        </authorList>
    </citation>
    <scope>GENOME REANNOTATION</scope>
    <source>
        <strain>cv. Nipponbare</strain>
    </source>
</reference>
<reference key="5">
    <citation type="journal article" date="2005" name="PLoS Biol.">
        <title>The genomes of Oryza sativa: a history of duplications.</title>
        <authorList>
            <person name="Yu J."/>
            <person name="Wang J."/>
            <person name="Lin W."/>
            <person name="Li S."/>
            <person name="Li H."/>
            <person name="Zhou J."/>
            <person name="Ni P."/>
            <person name="Dong W."/>
            <person name="Hu S."/>
            <person name="Zeng C."/>
            <person name="Zhang J."/>
            <person name="Zhang Y."/>
            <person name="Li R."/>
            <person name="Xu Z."/>
            <person name="Li S."/>
            <person name="Li X."/>
            <person name="Zheng H."/>
            <person name="Cong L."/>
            <person name="Lin L."/>
            <person name="Yin J."/>
            <person name="Geng J."/>
            <person name="Li G."/>
            <person name="Shi J."/>
            <person name="Liu J."/>
            <person name="Lv H."/>
            <person name="Li J."/>
            <person name="Wang J."/>
            <person name="Deng Y."/>
            <person name="Ran L."/>
            <person name="Shi X."/>
            <person name="Wang X."/>
            <person name="Wu Q."/>
            <person name="Li C."/>
            <person name="Ren X."/>
            <person name="Wang J."/>
            <person name="Wang X."/>
            <person name="Li D."/>
            <person name="Liu D."/>
            <person name="Zhang X."/>
            <person name="Ji Z."/>
            <person name="Zhao W."/>
            <person name="Sun Y."/>
            <person name="Zhang Z."/>
            <person name="Bao J."/>
            <person name="Han Y."/>
            <person name="Dong L."/>
            <person name="Ji J."/>
            <person name="Chen P."/>
            <person name="Wu S."/>
            <person name="Liu J."/>
            <person name="Xiao Y."/>
            <person name="Bu D."/>
            <person name="Tan J."/>
            <person name="Yang L."/>
            <person name="Ye C."/>
            <person name="Zhang J."/>
            <person name="Xu J."/>
            <person name="Zhou Y."/>
            <person name="Yu Y."/>
            <person name="Zhang B."/>
            <person name="Zhuang S."/>
            <person name="Wei H."/>
            <person name="Liu B."/>
            <person name="Lei M."/>
            <person name="Yu H."/>
            <person name="Li Y."/>
            <person name="Xu H."/>
            <person name="Wei S."/>
            <person name="He X."/>
            <person name="Fang L."/>
            <person name="Zhang Z."/>
            <person name="Zhang Y."/>
            <person name="Huang X."/>
            <person name="Su Z."/>
            <person name="Tong W."/>
            <person name="Li J."/>
            <person name="Tong Z."/>
            <person name="Li S."/>
            <person name="Ye J."/>
            <person name="Wang L."/>
            <person name="Fang L."/>
            <person name="Lei T."/>
            <person name="Chen C.-S."/>
            <person name="Chen H.-C."/>
            <person name="Xu Z."/>
            <person name="Li H."/>
            <person name="Huang H."/>
            <person name="Zhang F."/>
            <person name="Xu H."/>
            <person name="Li N."/>
            <person name="Zhao C."/>
            <person name="Li S."/>
            <person name="Dong L."/>
            <person name="Huang Y."/>
            <person name="Li L."/>
            <person name="Xi Y."/>
            <person name="Qi Q."/>
            <person name="Li W."/>
            <person name="Zhang B."/>
            <person name="Hu W."/>
            <person name="Zhang Y."/>
            <person name="Tian X."/>
            <person name="Jiao Y."/>
            <person name="Liang X."/>
            <person name="Jin J."/>
            <person name="Gao L."/>
            <person name="Zheng W."/>
            <person name="Hao B."/>
            <person name="Liu S.-M."/>
            <person name="Wang W."/>
            <person name="Yuan L."/>
            <person name="Cao M."/>
            <person name="McDermott J."/>
            <person name="Samudrala R."/>
            <person name="Wang J."/>
            <person name="Wong G.K.-S."/>
            <person name="Yang H."/>
        </authorList>
    </citation>
    <scope>NUCLEOTIDE SEQUENCE [LARGE SCALE GENOMIC DNA]</scope>
    <source>
        <strain>cv. Nipponbare</strain>
    </source>
</reference>
<reference key="6">
    <citation type="journal article" date="2003" name="Science">
        <title>Collection, mapping, and annotation of over 28,000 cDNA clones from japonica rice.</title>
        <authorList>
            <consortium name="The rice full-length cDNA consortium"/>
        </authorList>
    </citation>
    <scope>NUCLEOTIDE SEQUENCE [LARGE SCALE MRNA]</scope>
    <source>
        <strain>cv. Nipponbare</strain>
    </source>
</reference>
<reference key="7">
    <citation type="journal article" date="2009" name="Hum. Genomics">
        <title>The cytochrome p450 homepage.</title>
        <authorList>
            <person name="Nelson D.R."/>
        </authorList>
    </citation>
    <scope>IDENTIFICATION</scope>
</reference>
<reference key="8">
    <citation type="journal article" date="2013" name="Proc. Natl. Acad. Sci. U.S.A.">
        <title>CYP714B1 and CYP714B2 encode gibberellin 13-oxidases that reduce gibberellin activity in rice.</title>
        <authorList>
            <person name="Magome H."/>
            <person name="Nomura T."/>
            <person name="Hanada A."/>
            <person name="Takeda-Kamiya N."/>
            <person name="Ohnishi T."/>
            <person name="Shinma Y."/>
            <person name="Katsumata T."/>
            <person name="Kawaide H."/>
            <person name="Kamiya Y."/>
            <person name="Yamaguchi S."/>
        </authorList>
    </citation>
    <scope>FUNCTION</scope>
</reference>
<sequence length="522" mass="58815">MELFSSQQWLALLPPIILCILLFSYVYIILWLRPERLRQKLRSQGVRGPKPSFLFGNIPEMRRIQQLAKSAHEQEAGSTDMFSSNYVATLFPYFLHWSRVYGSIYLYSTGSIQVLNVTDPNMVKELANCKSLDLGKPCYLQKERGALLGMGILTSNGDLWVHQRKVIAPELFMERVKGMVNLMMEAAMSMLNSWKNEVEDRGGSAEIVVDEFLRTFSADVISRACFGSSFSEGKEIFIKIRQLQKAMAKQSMLIGVPGSRYLPTRSNRGIWNLDSSIRTLILNISKKYEHDSSTSVNKDLLHSIIQGSKDGPFASCTPEDFIVDNCKNIYFAGHETTSTTAAWCLMLLASHHEWQSRARVESLDICQGRPLDFDILRKLKKLTMVIQETLRLYPPASFVAREALNDMKLGGIDIPKGTNIWIPIAMAHRDPSVWGPSADKFDPDRFANGIAGACKPPHMYMPFGVGVRTCAGQNLAMVELKVVLSLLLSKFEFKLSPNYVHCPAFRLTIEPGKGVPLIFREL</sequence>
<gene>
    <name type="primary">CYP714C2</name>
    <name type="ordered locus">Os12g0119000</name>
    <name type="ordered locus">LOC_Os12g02640</name>
    <name type="ORF">OsJ_35025</name>
</gene>